<feature type="chain" id="PRO_0000292346" description="Glyceraldehyde-3-phosphate dehydrogenase, cytosolic">
    <location>
        <begin position="1" status="less than"/>
        <end position="312" status="greater than"/>
    </location>
</feature>
<feature type="active site" description="Nucleophile" evidence="2">
    <location>
        <position position="145"/>
    </location>
</feature>
<feature type="binding site" evidence="1">
    <location>
        <begin position="5"/>
        <end position="6"/>
    </location>
    <ligand>
        <name>NAD(+)</name>
        <dbReference type="ChEBI" id="CHEBI:57540"/>
    </ligand>
</feature>
<feature type="binding site" evidence="1">
    <location>
        <position position="27"/>
    </location>
    <ligand>
        <name>NAD(+)</name>
        <dbReference type="ChEBI" id="CHEBI:57540"/>
    </ligand>
</feature>
<feature type="binding site" evidence="1">
    <location>
        <begin position="144"/>
        <end position="146"/>
    </location>
    <ligand>
        <name>D-glyceraldehyde 3-phosphate</name>
        <dbReference type="ChEBI" id="CHEBI:59776"/>
    </ligand>
</feature>
<feature type="binding site" evidence="1">
    <location>
        <position position="175"/>
    </location>
    <ligand>
        <name>D-glyceraldehyde 3-phosphate</name>
        <dbReference type="ChEBI" id="CHEBI:59776"/>
    </ligand>
</feature>
<feature type="binding site" evidence="1">
    <location>
        <begin position="204"/>
        <end position="205"/>
    </location>
    <ligand>
        <name>D-glyceraldehyde 3-phosphate</name>
        <dbReference type="ChEBI" id="CHEBI:59776"/>
    </ligand>
</feature>
<feature type="binding site" evidence="1">
    <location>
        <position position="227"/>
    </location>
    <ligand>
        <name>D-glyceraldehyde 3-phosphate</name>
        <dbReference type="ChEBI" id="CHEBI:59776"/>
    </ligand>
</feature>
<feature type="binding site" evidence="1">
    <location>
        <position position="309"/>
    </location>
    <ligand>
        <name>NAD(+)</name>
        <dbReference type="ChEBI" id="CHEBI:57540"/>
    </ligand>
</feature>
<feature type="site" description="Activates thiol group during catalysis" evidence="1">
    <location>
        <position position="172"/>
    </location>
</feature>
<feature type="non-terminal residue">
    <location>
        <position position="1"/>
    </location>
</feature>
<feature type="non-terminal residue">
    <location>
        <position position="312"/>
    </location>
</feature>
<proteinExistence type="evidence at transcript level"/>
<keyword id="KW-0963">Cytoplasm</keyword>
<keyword id="KW-0324">Glycolysis</keyword>
<keyword id="KW-0520">NAD</keyword>
<keyword id="KW-0560">Oxidoreductase</keyword>
<accession>Q8VXQ8</accession>
<comment type="function">
    <text evidence="1">Key enzyme in glycolysis that catalyzes the first step of the pathway by converting D-glyceraldehyde 3-phosphate (G3P) into 3-phospho-D-glyceroyl phosphate. Essential for the maintenance of cellular ATP levels and carbohydrate metabolism (By similarity).</text>
</comment>
<comment type="catalytic activity">
    <reaction evidence="2">
        <text>D-glyceraldehyde 3-phosphate + phosphate + NAD(+) = (2R)-3-phospho-glyceroyl phosphate + NADH + H(+)</text>
        <dbReference type="Rhea" id="RHEA:10300"/>
        <dbReference type="ChEBI" id="CHEBI:15378"/>
        <dbReference type="ChEBI" id="CHEBI:43474"/>
        <dbReference type="ChEBI" id="CHEBI:57540"/>
        <dbReference type="ChEBI" id="CHEBI:57604"/>
        <dbReference type="ChEBI" id="CHEBI:57945"/>
        <dbReference type="ChEBI" id="CHEBI:59776"/>
        <dbReference type="EC" id="1.2.1.12"/>
    </reaction>
</comment>
<comment type="pathway">
    <text>Carbohydrate degradation; glycolysis; pyruvate from D-glyceraldehyde 3-phosphate: step 1/5.</text>
</comment>
<comment type="subunit">
    <text evidence="1">Homotetramer.</text>
</comment>
<comment type="subcellular location">
    <subcellularLocation>
        <location evidence="1">Cytoplasm</location>
    </subcellularLocation>
</comment>
<comment type="induction">
    <text evidence="3">Induced by sugar addition.</text>
</comment>
<comment type="miscellaneous">
    <text>Algae contain three forms of GAPDH: two cytosolic forms which participate in glycolysis and one chloroplastic form which participates in photosynthesis. These three forms are encoded by distinct genes.</text>
</comment>
<comment type="similarity">
    <text evidence="4">Belongs to the glyceraldehyde-3-phosphate dehydrogenase family.</text>
</comment>
<gene>
    <name type="primary">GapC</name>
</gene>
<organism>
    <name type="scientific">Scenedesmus vacuolatus</name>
    <name type="common">Green alga</name>
    <name type="synonym">Coelastrella vacuolata</name>
    <dbReference type="NCBI Taxonomy" id="77546"/>
    <lineage>
        <taxon>Eukaryota</taxon>
        <taxon>Viridiplantae</taxon>
        <taxon>Chlorophyta</taxon>
        <taxon>core chlorophytes</taxon>
        <taxon>Chlorophyceae</taxon>
        <taxon>CS clade</taxon>
        <taxon>Sphaeropleales</taxon>
        <taxon>Scenedesmaceae</taxon>
        <taxon>Scenedesmus</taxon>
    </lineage>
</organism>
<name>G3PC_SCEVA</name>
<sequence>NGFGRIGSLVLRATLDRKDVKVVAINDPFIEGEYMAYMFKYDSVHGRYEGDVQGDKHGITINGEQIKTLAMMDPTQIPWGEVGADYVVESTGVFTTVDKCQAHLKGGAKKVVISAPSADAPMFVMGVNADKYDPKQHTVVSNASCTTNCLAPLAKVVNDTFGIKEALMTTVHATTATQKTVDGPSKKDWRGGRGASANIIPSSTGAAKAVGKVIPELNGKLTGMAFRVPTQDVSVVDLTCILEKPAKYEDIMAALKAASEGPMKGILGYTEDDVVSSDFVSDPASSTVDAKAGIMLSPTFVKLVSWYDNEWG</sequence>
<protein>
    <recommendedName>
        <fullName>Glyceraldehyde-3-phosphate dehydrogenase, cytosolic</fullName>
        <ecNumber>1.2.1.12</ecNumber>
    </recommendedName>
</protein>
<evidence type="ECO:0000250" key="1"/>
<evidence type="ECO:0000255" key="2">
    <source>
        <dbReference type="PROSITE-ProRule" id="PRU10009"/>
    </source>
</evidence>
<evidence type="ECO:0000269" key="3">
    <source>
    </source>
</evidence>
<evidence type="ECO:0000305" key="4"/>
<reference key="1">
    <citation type="journal article" date="2005" name="Planta">
        <title>Sugar-mediated transcriptional regulation of the Gap gene system and concerted photosystem II functional modulation in the microalga Scenedesmus vacuolatus.</title>
        <authorList>
            <person name="Valverde F."/>
            <person name="Ortega J.M."/>
            <person name="Losada M."/>
            <person name="Serrano A."/>
        </authorList>
    </citation>
    <scope>NUCLEOTIDE SEQUENCE [MRNA]</scope>
    <scope>INDUCTION</scope>
    <source>
        <strain>SAG 211-8b</strain>
    </source>
</reference>
<dbReference type="EC" id="1.2.1.12"/>
<dbReference type="EMBL" id="AJ252209">
    <property type="protein sequence ID" value="CAC81012.1"/>
    <property type="molecule type" value="mRNA"/>
</dbReference>
<dbReference type="SMR" id="Q8VXQ8"/>
<dbReference type="UniPathway" id="UPA00109">
    <property type="reaction ID" value="UER00184"/>
</dbReference>
<dbReference type="GO" id="GO:0005829">
    <property type="term" value="C:cytosol"/>
    <property type="evidence" value="ECO:0007669"/>
    <property type="project" value="TreeGrafter"/>
</dbReference>
<dbReference type="GO" id="GO:0004365">
    <property type="term" value="F:glyceraldehyde-3-phosphate dehydrogenase (NAD+) (phosphorylating) activity"/>
    <property type="evidence" value="ECO:0007669"/>
    <property type="project" value="UniProtKB-EC"/>
</dbReference>
<dbReference type="GO" id="GO:0051287">
    <property type="term" value="F:NAD binding"/>
    <property type="evidence" value="ECO:0007669"/>
    <property type="project" value="InterPro"/>
</dbReference>
<dbReference type="GO" id="GO:0050661">
    <property type="term" value="F:NADP binding"/>
    <property type="evidence" value="ECO:0007669"/>
    <property type="project" value="InterPro"/>
</dbReference>
<dbReference type="GO" id="GO:0006006">
    <property type="term" value="P:glucose metabolic process"/>
    <property type="evidence" value="ECO:0007669"/>
    <property type="project" value="InterPro"/>
</dbReference>
<dbReference type="GO" id="GO:0006096">
    <property type="term" value="P:glycolytic process"/>
    <property type="evidence" value="ECO:0007669"/>
    <property type="project" value="UniProtKB-UniPathway"/>
</dbReference>
<dbReference type="CDD" id="cd18126">
    <property type="entry name" value="GAPDH_I_C"/>
    <property type="match status" value="1"/>
</dbReference>
<dbReference type="CDD" id="cd05214">
    <property type="entry name" value="GAPDH_I_N"/>
    <property type="match status" value="1"/>
</dbReference>
<dbReference type="FunFam" id="3.30.360.10:FF:000001">
    <property type="entry name" value="Glyceraldehyde-3-phosphate dehydrogenase"/>
    <property type="match status" value="1"/>
</dbReference>
<dbReference type="FunFam" id="3.40.50.720:FF:000266">
    <property type="entry name" value="Glyceraldehyde-3-phosphate dehydrogenase"/>
    <property type="match status" value="1"/>
</dbReference>
<dbReference type="Gene3D" id="3.30.360.10">
    <property type="entry name" value="Dihydrodipicolinate Reductase, domain 2"/>
    <property type="match status" value="1"/>
</dbReference>
<dbReference type="Gene3D" id="3.40.50.720">
    <property type="entry name" value="NAD(P)-binding Rossmann-like Domain"/>
    <property type="match status" value="1"/>
</dbReference>
<dbReference type="InterPro" id="IPR020831">
    <property type="entry name" value="GlycerAld/Erythrose_P_DH"/>
</dbReference>
<dbReference type="InterPro" id="IPR020830">
    <property type="entry name" value="GlycerAld_3-P_DH_AS"/>
</dbReference>
<dbReference type="InterPro" id="IPR020829">
    <property type="entry name" value="GlycerAld_3-P_DH_cat"/>
</dbReference>
<dbReference type="InterPro" id="IPR020828">
    <property type="entry name" value="GlycerAld_3-P_DH_NAD(P)-bd"/>
</dbReference>
<dbReference type="InterPro" id="IPR006424">
    <property type="entry name" value="Glyceraldehyde-3-P_DH_1"/>
</dbReference>
<dbReference type="InterPro" id="IPR036291">
    <property type="entry name" value="NAD(P)-bd_dom_sf"/>
</dbReference>
<dbReference type="NCBIfam" id="TIGR01534">
    <property type="entry name" value="GAPDH-I"/>
    <property type="match status" value="1"/>
</dbReference>
<dbReference type="PANTHER" id="PTHR10836">
    <property type="entry name" value="GLYCERALDEHYDE 3-PHOSPHATE DEHYDROGENASE"/>
    <property type="match status" value="1"/>
</dbReference>
<dbReference type="PANTHER" id="PTHR10836:SF76">
    <property type="entry name" value="GLYCERALDEHYDE-3-PHOSPHATE DEHYDROGENASE-RELATED"/>
    <property type="match status" value="1"/>
</dbReference>
<dbReference type="Pfam" id="PF02800">
    <property type="entry name" value="Gp_dh_C"/>
    <property type="match status" value="1"/>
</dbReference>
<dbReference type="Pfam" id="PF00044">
    <property type="entry name" value="Gp_dh_N"/>
    <property type="match status" value="1"/>
</dbReference>
<dbReference type="PIRSF" id="PIRSF000149">
    <property type="entry name" value="GAP_DH"/>
    <property type="match status" value="1"/>
</dbReference>
<dbReference type="PRINTS" id="PR00078">
    <property type="entry name" value="G3PDHDRGNASE"/>
</dbReference>
<dbReference type="SMART" id="SM00846">
    <property type="entry name" value="Gp_dh_N"/>
    <property type="match status" value="1"/>
</dbReference>
<dbReference type="SUPFAM" id="SSF55347">
    <property type="entry name" value="Glyceraldehyde-3-phosphate dehydrogenase-like, C-terminal domain"/>
    <property type="match status" value="1"/>
</dbReference>
<dbReference type="SUPFAM" id="SSF51735">
    <property type="entry name" value="NAD(P)-binding Rossmann-fold domains"/>
    <property type="match status" value="1"/>
</dbReference>
<dbReference type="PROSITE" id="PS00071">
    <property type="entry name" value="GAPDH"/>
    <property type="match status" value="1"/>
</dbReference>